<organism>
    <name type="scientific">Gloeobacter violaceus (strain ATCC 29082 / PCC 7421)</name>
    <dbReference type="NCBI Taxonomy" id="251221"/>
    <lineage>
        <taxon>Bacteria</taxon>
        <taxon>Bacillati</taxon>
        <taxon>Cyanobacteriota</taxon>
        <taxon>Cyanophyceae</taxon>
        <taxon>Gloeobacterales</taxon>
        <taxon>Gloeobacteraceae</taxon>
        <taxon>Gloeobacter</taxon>
    </lineage>
</organism>
<comment type="function">
    <text evidence="1">May play a key role in the regulation of the intracellular concentration of adenosylhomocysteine.</text>
</comment>
<comment type="catalytic activity">
    <reaction evidence="1">
        <text>S-adenosyl-L-homocysteine + H2O = L-homocysteine + adenosine</text>
        <dbReference type="Rhea" id="RHEA:21708"/>
        <dbReference type="ChEBI" id="CHEBI:15377"/>
        <dbReference type="ChEBI" id="CHEBI:16335"/>
        <dbReference type="ChEBI" id="CHEBI:57856"/>
        <dbReference type="ChEBI" id="CHEBI:58199"/>
        <dbReference type="EC" id="3.13.2.1"/>
    </reaction>
</comment>
<comment type="cofactor">
    <cofactor evidence="1">
        <name>NAD(+)</name>
        <dbReference type="ChEBI" id="CHEBI:57540"/>
    </cofactor>
    <text evidence="1">Binds 1 NAD(+) per subunit.</text>
</comment>
<comment type="pathway">
    <text evidence="1">Amino-acid biosynthesis; L-homocysteine biosynthesis; L-homocysteine from S-adenosyl-L-homocysteine: step 1/1.</text>
</comment>
<comment type="subcellular location">
    <subcellularLocation>
        <location evidence="1">Cytoplasm</location>
    </subcellularLocation>
</comment>
<comment type="similarity">
    <text evidence="1">Belongs to the adenosylhomocysteinase family.</text>
</comment>
<proteinExistence type="inferred from homology"/>
<name>SAHH_GLOVI</name>
<dbReference type="EC" id="3.13.2.1" evidence="1"/>
<dbReference type="EMBL" id="BA000045">
    <property type="protein sequence ID" value="BAC91124.1"/>
    <property type="molecule type" value="Genomic_DNA"/>
</dbReference>
<dbReference type="RefSeq" id="NP_926129.1">
    <property type="nucleotide sequence ID" value="NC_005125.1"/>
</dbReference>
<dbReference type="RefSeq" id="WP_011143175.1">
    <property type="nucleotide sequence ID" value="NC_005125.1"/>
</dbReference>
<dbReference type="SMR" id="Q7NGI6"/>
<dbReference type="FunCoup" id="Q7NGI6">
    <property type="interactions" value="322"/>
</dbReference>
<dbReference type="STRING" id="251221.gene:10760690"/>
<dbReference type="EnsemblBacteria" id="BAC91124">
    <property type="protein sequence ID" value="BAC91124"/>
    <property type="gene ID" value="BAC91124"/>
</dbReference>
<dbReference type="KEGG" id="gvi:glr3183"/>
<dbReference type="PATRIC" id="fig|251221.4.peg.3213"/>
<dbReference type="eggNOG" id="COG0499">
    <property type="taxonomic scope" value="Bacteria"/>
</dbReference>
<dbReference type="HOGENOM" id="CLU_025194_2_1_3"/>
<dbReference type="InParanoid" id="Q7NGI6"/>
<dbReference type="OrthoDB" id="9802717at2"/>
<dbReference type="PhylomeDB" id="Q7NGI6"/>
<dbReference type="UniPathway" id="UPA00314">
    <property type="reaction ID" value="UER00076"/>
</dbReference>
<dbReference type="Proteomes" id="UP000000557">
    <property type="component" value="Chromosome"/>
</dbReference>
<dbReference type="GO" id="GO:0005829">
    <property type="term" value="C:cytosol"/>
    <property type="evidence" value="ECO:0000318"/>
    <property type="project" value="GO_Central"/>
</dbReference>
<dbReference type="GO" id="GO:0004013">
    <property type="term" value="F:adenosylhomocysteinase activity"/>
    <property type="evidence" value="ECO:0000318"/>
    <property type="project" value="GO_Central"/>
</dbReference>
<dbReference type="GO" id="GO:0071269">
    <property type="term" value="P:L-homocysteine biosynthetic process"/>
    <property type="evidence" value="ECO:0007669"/>
    <property type="project" value="UniProtKB-UniRule"/>
</dbReference>
<dbReference type="GO" id="GO:0006730">
    <property type="term" value="P:one-carbon metabolic process"/>
    <property type="evidence" value="ECO:0007669"/>
    <property type="project" value="UniProtKB-KW"/>
</dbReference>
<dbReference type="GO" id="GO:0033353">
    <property type="term" value="P:S-adenosylmethionine cycle"/>
    <property type="evidence" value="ECO:0000318"/>
    <property type="project" value="GO_Central"/>
</dbReference>
<dbReference type="CDD" id="cd00401">
    <property type="entry name" value="SAHH"/>
    <property type="match status" value="1"/>
</dbReference>
<dbReference type="FunFam" id="3.40.50.720:FF:000004">
    <property type="entry name" value="Adenosylhomocysteinase"/>
    <property type="match status" value="1"/>
</dbReference>
<dbReference type="Gene3D" id="3.40.50.1480">
    <property type="entry name" value="Adenosylhomocysteinase-like"/>
    <property type="match status" value="1"/>
</dbReference>
<dbReference type="Gene3D" id="3.40.50.720">
    <property type="entry name" value="NAD(P)-binding Rossmann-like Domain"/>
    <property type="match status" value="1"/>
</dbReference>
<dbReference type="HAMAP" id="MF_00563">
    <property type="entry name" value="AdoHcyase"/>
    <property type="match status" value="1"/>
</dbReference>
<dbReference type="InterPro" id="IPR042172">
    <property type="entry name" value="Adenosylhomocyst_ase-like_sf"/>
</dbReference>
<dbReference type="InterPro" id="IPR000043">
    <property type="entry name" value="Adenosylhomocysteinase-like"/>
</dbReference>
<dbReference type="InterPro" id="IPR015878">
    <property type="entry name" value="Ado_hCys_hydrolase_NAD-bd"/>
</dbReference>
<dbReference type="InterPro" id="IPR036291">
    <property type="entry name" value="NAD(P)-bd_dom_sf"/>
</dbReference>
<dbReference type="InterPro" id="IPR020082">
    <property type="entry name" value="S-Ado-L-homoCys_hydrolase_CS"/>
</dbReference>
<dbReference type="NCBIfam" id="TIGR00936">
    <property type="entry name" value="ahcY"/>
    <property type="match status" value="1"/>
</dbReference>
<dbReference type="NCBIfam" id="NF004005">
    <property type="entry name" value="PRK05476.2-3"/>
    <property type="match status" value="1"/>
</dbReference>
<dbReference type="PANTHER" id="PTHR23420">
    <property type="entry name" value="ADENOSYLHOMOCYSTEINASE"/>
    <property type="match status" value="1"/>
</dbReference>
<dbReference type="PANTHER" id="PTHR23420:SF0">
    <property type="entry name" value="ADENOSYLHOMOCYSTEINASE"/>
    <property type="match status" value="1"/>
</dbReference>
<dbReference type="Pfam" id="PF05221">
    <property type="entry name" value="AdoHcyase"/>
    <property type="match status" value="2"/>
</dbReference>
<dbReference type="Pfam" id="PF00670">
    <property type="entry name" value="AdoHcyase_NAD"/>
    <property type="match status" value="1"/>
</dbReference>
<dbReference type="PIRSF" id="PIRSF001109">
    <property type="entry name" value="Ad_hcy_hydrolase"/>
    <property type="match status" value="1"/>
</dbReference>
<dbReference type="SMART" id="SM00996">
    <property type="entry name" value="AdoHcyase"/>
    <property type="match status" value="1"/>
</dbReference>
<dbReference type="SMART" id="SM00997">
    <property type="entry name" value="AdoHcyase_NAD"/>
    <property type="match status" value="1"/>
</dbReference>
<dbReference type="SUPFAM" id="SSF52283">
    <property type="entry name" value="Formate/glycerate dehydrogenase catalytic domain-like"/>
    <property type="match status" value="1"/>
</dbReference>
<dbReference type="SUPFAM" id="SSF51735">
    <property type="entry name" value="NAD(P)-binding Rossmann-fold domains"/>
    <property type="match status" value="1"/>
</dbReference>
<dbReference type="PROSITE" id="PS00738">
    <property type="entry name" value="ADOHCYASE_1"/>
    <property type="match status" value="1"/>
</dbReference>
<dbReference type="PROSITE" id="PS00739">
    <property type="entry name" value="ADOHCYASE_2"/>
    <property type="match status" value="1"/>
</dbReference>
<feature type="chain" id="PRO_0000116964" description="Adenosylhomocysteinase">
    <location>
        <begin position="1"/>
        <end position="428"/>
    </location>
</feature>
<feature type="binding site" evidence="1">
    <location>
        <position position="62"/>
    </location>
    <ligand>
        <name>substrate</name>
    </ligand>
</feature>
<feature type="binding site" evidence="1">
    <location>
        <position position="134"/>
    </location>
    <ligand>
        <name>substrate</name>
    </ligand>
</feature>
<feature type="binding site" evidence="1">
    <location>
        <position position="159"/>
    </location>
    <ligand>
        <name>substrate</name>
    </ligand>
</feature>
<feature type="binding site" evidence="1">
    <location>
        <begin position="160"/>
        <end position="162"/>
    </location>
    <ligand>
        <name>NAD(+)</name>
        <dbReference type="ChEBI" id="CHEBI:57540"/>
    </ligand>
</feature>
<feature type="binding site" evidence="1">
    <location>
        <position position="189"/>
    </location>
    <ligand>
        <name>substrate</name>
    </ligand>
</feature>
<feature type="binding site" evidence="1">
    <location>
        <position position="193"/>
    </location>
    <ligand>
        <name>substrate</name>
    </ligand>
</feature>
<feature type="binding site" evidence="1">
    <location>
        <position position="194"/>
    </location>
    <ligand>
        <name>NAD(+)</name>
        <dbReference type="ChEBI" id="CHEBI:57540"/>
    </ligand>
</feature>
<feature type="binding site" evidence="1">
    <location>
        <begin position="223"/>
        <end position="228"/>
    </location>
    <ligand>
        <name>NAD(+)</name>
        <dbReference type="ChEBI" id="CHEBI:57540"/>
    </ligand>
</feature>
<feature type="binding site" evidence="1">
    <location>
        <position position="246"/>
    </location>
    <ligand>
        <name>NAD(+)</name>
        <dbReference type="ChEBI" id="CHEBI:57540"/>
    </ligand>
</feature>
<feature type="binding site" evidence="1">
    <location>
        <position position="281"/>
    </location>
    <ligand>
        <name>NAD(+)</name>
        <dbReference type="ChEBI" id="CHEBI:57540"/>
    </ligand>
</feature>
<feature type="binding site" evidence="1">
    <location>
        <begin position="302"/>
        <end position="304"/>
    </location>
    <ligand>
        <name>NAD(+)</name>
        <dbReference type="ChEBI" id="CHEBI:57540"/>
    </ligand>
</feature>
<feature type="binding site" evidence="1">
    <location>
        <position position="349"/>
    </location>
    <ligand>
        <name>NAD(+)</name>
        <dbReference type="ChEBI" id="CHEBI:57540"/>
    </ligand>
</feature>
<gene>
    <name evidence="1" type="primary">ahcY</name>
    <name type="ordered locus">glr3183</name>
</gene>
<keyword id="KW-0963">Cytoplasm</keyword>
<keyword id="KW-0378">Hydrolase</keyword>
<keyword id="KW-0520">NAD</keyword>
<keyword id="KW-0554">One-carbon metabolism</keyword>
<keyword id="KW-1185">Reference proteome</keyword>
<accession>Q7NGI6</accession>
<sequence length="428" mass="46150">MTAVKTPIQVRYEVRNLELAAEGRQRIEWAAREMPVLKQLRQRFSQERPLAGIRISACCHVTTETANLAVALKAAGADALLIASNPLSTQDDVAASLVVDHGIPVFALKGEDTATYLRHVRVALDHRPQIIIDDGSDVVATMIKDRPDLIAGVIGTTEETTTGIVRLKAMLAAGVLTFPAMAVNDAETKHFFDNRYGTGQSTLDGIIRATNILLAGKTIVVAGYGWCGKGVALRARGMGANVVVTEINPVRAIEAAMDGLQVMPMAEAACLGDLFITVTGNKHVIRREHFAMMKDGAIVCNSGHFDIEIDLVALGELSSERRMVRPFTEEYTLEGGKSVIVLGEGRLINLAAAEGHPASVMDMSFANQALAVEYLIKNQGKLSPGIYNIPEELDRQIAALKLAAMGIAIDTLTPDQLHYISSWDEGTE</sequence>
<reference key="1">
    <citation type="journal article" date="2003" name="DNA Res.">
        <title>Complete genome structure of Gloeobacter violaceus PCC 7421, a cyanobacterium that lacks thylakoids.</title>
        <authorList>
            <person name="Nakamura Y."/>
            <person name="Kaneko T."/>
            <person name="Sato S."/>
            <person name="Mimuro M."/>
            <person name="Miyashita H."/>
            <person name="Tsuchiya T."/>
            <person name="Sasamoto S."/>
            <person name="Watanabe A."/>
            <person name="Kawashima K."/>
            <person name="Kishida Y."/>
            <person name="Kiyokawa C."/>
            <person name="Kohara M."/>
            <person name="Matsumoto M."/>
            <person name="Matsuno A."/>
            <person name="Nakazaki N."/>
            <person name="Shimpo S."/>
            <person name="Takeuchi C."/>
            <person name="Yamada M."/>
            <person name="Tabata S."/>
        </authorList>
    </citation>
    <scope>NUCLEOTIDE SEQUENCE [LARGE SCALE GENOMIC DNA]</scope>
    <source>
        <strain>ATCC 29082 / PCC 7421</strain>
    </source>
</reference>
<evidence type="ECO:0000255" key="1">
    <source>
        <dbReference type="HAMAP-Rule" id="MF_00563"/>
    </source>
</evidence>
<protein>
    <recommendedName>
        <fullName evidence="1">Adenosylhomocysteinase</fullName>
        <ecNumber evidence="1">3.13.2.1</ecNumber>
    </recommendedName>
    <alternativeName>
        <fullName evidence="1">S-adenosyl-L-homocysteine hydrolase</fullName>
        <shortName evidence="1">AdoHcyase</shortName>
    </alternativeName>
</protein>